<dbReference type="EMBL" id="EF094489">
    <property type="protein sequence ID" value="ABL84287.1"/>
    <property type="molecule type" value="Genomic_DNA"/>
</dbReference>
<dbReference type="GlyCosmos" id="A1YL72">
    <property type="glycosylation" value="1 site, No reported glycans"/>
</dbReference>
<dbReference type="GO" id="GO:0005615">
    <property type="term" value="C:extracellular space"/>
    <property type="evidence" value="ECO:0000250"/>
    <property type="project" value="UniProtKB"/>
</dbReference>
<dbReference type="GO" id="GO:0031779">
    <property type="term" value="F:melanocortin receptor binding"/>
    <property type="evidence" value="ECO:0007669"/>
    <property type="project" value="TreeGrafter"/>
</dbReference>
<dbReference type="GO" id="GO:0005184">
    <property type="term" value="F:neuropeptide hormone activity"/>
    <property type="evidence" value="ECO:0007669"/>
    <property type="project" value="TreeGrafter"/>
</dbReference>
<dbReference type="GO" id="GO:0009755">
    <property type="term" value="P:hormone-mediated signaling pathway"/>
    <property type="evidence" value="ECO:0007669"/>
    <property type="project" value="InterPro"/>
</dbReference>
<dbReference type="GO" id="GO:0042438">
    <property type="term" value="P:melanin biosynthetic process"/>
    <property type="evidence" value="ECO:0000250"/>
    <property type="project" value="UniProtKB"/>
</dbReference>
<dbReference type="GO" id="GO:0032438">
    <property type="term" value="P:melanosome organization"/>
    <property type="evidence" value="ECO:0007669"/>
    <property type="project" value="TreeGrafter"/>
</dbReference>
<dbReference type="FunFam" id="4.10.760.10:FF:000002">
    <property type="entry name" value="Agouti-signaling protein"/>
    <property type="match status" value="1"/>
</dbReference>
<dbReference type="Gene3D" id="4.10.760.10">
    <property type="entry name" value="Agouti domain"/>
    <property type="match status" value="1"/>
</dbReference>
<dbReference type="InterPro" id="IPR007733">
    <property type="entry name" value="Agouti"/>
</dbReference>
<dbReference type="InterPro" id="IPR027300">
    <property type="entry name" value="Agouti_dom"/>
</dbReference>
<dbReference type="InterPro" id="IPR036836">
    <property type="entry name" value="Agouti_dom_sf"/>
</dbReference>
<dbReference type="PANTHER" id="PTHR16551">
    <property type="entry name" value="AGOUTI RELATED"/>
    <property type="match status" value="1"/>
</dbReference>
<dbReference type="PANTHER" id="PTHR16551:SF1">
    <property type="entry name" value="AGOUTI-SIGNALING PROTEIN"/>
    <property type="match status" value="1"/>
</dbReference>
<dbReference type="Pfam" id="PF05039">
    <property type="entry name" value="Agouti"/>
    <property type="match status" value="1"/>
</dbReference>
<dbReference type="SMART" id="SM00792">
    <property type="entry name" value="Agouti"/>
    <property type="match status" value="1"/>
</dbReference>
<dbReference type="SUPFAM" id="SSF57055">
    <property type="entry name" value="Agouti-related protein"/>
    <property type="match status" value="1"/>
</dbReference>
<dbReference type="PROSITE" id="PS60024">
    <property type="entry name" value="AGOUTI_1"/>
    <property type="match status" value="1"/>
</dbReference>
<dbReference type="PROSITE" id="PS51150">
    <property type="entry name" value="AGOUTI_2"/>
    <property type="match status" value="1"/>
</dbReference>
<name>ASIP_TRAAU</name>
<keyword id="KW-1015">Disulfide bond</keyword>
<keyword id="KW-0325">Glycoprotein</keyword>
<keyword id="KW-0960">Knottin</keyword>
<keyword id="KW-0964">Secreted</keyword>
<keyword id="KW-0732">Signal</keyword>
<reference key="1">
    <citation type="journal article" date="2006" name="Mamm. Genome">
        <title>Investigation of the role of the agouti signaling protein gene (ASIP) in coat color evolution in primates.</title>
        <authorList>
            <person name="Mundy N.I."/>
            <person name="Kelly J."/>
        </authorList>
    </citation>
    <scope>NUCLEOTIDE SEQUENCE [GENOMIC DNA]</scope>
</reference>
<feature type="signal peptide" evidence="4">
    <location>
        <begin position="1"/>
        <end position="22"/>
    </location>
</feature>
<feature type="chain" id="PRO_0000285061" description="Agouti-signaling protein">
    <location>
        <begin position="23"/>
        <end position="132"/>
    </location>
</feature>
<feature type="domain" description="Agouti" evidence="5">
    <location>
        <begin position="93"/>
        <end position="132"/>
    </location>
</feature>
<feature type="region of interest" description="Disordered" evidence="6">
    <location>
        <begin position="62"/>
        <end position="93"/>
    </location>
</feature>
<feature type="compositionally biased region" description="Basic and acidic residues" evidence="6">
    <location>
        <begin position="63"/>
        <end position="79"/>
    </location>
</feature>
<feature type="glycosylation site" description="N-linked (GlcNAc...) asparagine" evidence="4">
    <location>
        <position position="39"/>
    </location>
</feature>
<feature type="disulfide bond" evidence="5">
    <location>
        <begin position="93"/>
        <end position="108"/>
    </location>
</feature>
<feature type="disulfide bond" evidence="5">
    <location>
        <begin position="100"/>
        <end position="114"/>
    </location>
</feature>
<feature type="disulfide bond" evidence="5">
    <location>
        <begin position="107"/>
        <end position="125"/>
    </location>
</feature>
<feature type="disulfide bond" evidence="5">
    <location>
        <begin position="111"/>
        <end position="132"/>
    </location>
</feature>
<feature type="disulfide bond" evidence="5">
    <location>
        <begin position="116"/>
        <end position="123"/>
    </location>
</feature>
<sequence>MDVTRLLLATLLVFLCFFTVYSHLPPEEKLRDDRSLRSNSSVNLLDFPSVSIVALNKKSKQISRKEAEKKRSSKKEASMKKVAQPRTPLSAPCVATRDSCKPPAPACCDPCASCQCRFFRSACSCRVLSLNC</sequence>
<proteinExistence type="inferred from homology"/>
<gene>
    <name type="primary">ASIP</name>
</gene>
<evidence type="ECO:0000250" key="1"/>
<evidence type="ECO:0000250" key="2">
    <source>
        <dbReference type="UniProtKB" id="P42127"/>
    </source>
</evidence>
<evidence type="ECO:0000250" key="3">
    <source>
        <dbReference type="UniProtKB" id="Q03288"/>
    </source>
</evidence>
<evidence type="ECO:0000255" key="4"/>
<evidence type="ECO:0000255" key="5">
    <source>
        <dbReference type="PROSITE-ProRule" id="PRU00494"/>
    </source>
</evidence>
<evidence type="ECO:0000256" key="6">
    <source>
        <dbReference type="SAM" id="MobiDB-lite"/>
    </source>
</evidence>
<organism>
    <name type="scientific">Trachypithecus auratus</name>
    <name type="common">Javan langur</name>
    <dbReference type="NCBI Taxonomy" id="222416"/>
    <lineage>
        <taxon>Eukaryota</taxon>
        <taxon>Metazoa</taxon>
        <taxon>Chordata</taxon>
        <taxon>Craniata</taxon>
        <taxon>Vertebrata</taxon>
        <taxon>Euteleostomi</taxon>
        <taxon>Mammalia</taxon>
        <taxon>Eutheria</taxon>
        <taxon>Euarchontoglires</taxon>
        <taxon>Primates</taxon>
        <taxon>Haplorrhini</taxon>
        <taxon>Catarrhini</taxon>
        <taxon>Cercopithecidae</taxon>
        <taxon>Colobinae</taxon>
        <taxon>Trachypithecus</taxon>
    </lineage>
</organism>
<comment type="function">
    <text evidence="3">Involved in the regulation of melanogenesis. The binding of ASP to MC1R precludes alpha-MSH initiated signaling and thus blocks production of cAMP, leading to a down-regulation of eumelanogenesis (brown/black pigment) and thus increasing synthesis of pheomelanin (yellow/red pigment) (By similarity).</text>
</comment>
<comment type="subcellular location">
    <subcellularLocation>
        <location evidence="2">Secreted</location>
    </subcellularLocation>
</comment>
<comment type="domain">
    <text evidence="1">The presence of a 'disulfide through disulfide knot' structurally defines this protein as a knottin.</text>
</comment>
<protein>
    <recommendedName>
        <fullName>Agouti-signaling protein</fullName>
        <shortName>ASP</shortName>
    </recommendedName>
    <alternativeName>
        <fullName>Agouti switch protein</fullName>
    </alternativeName>
</protein>
<accession>A1YL72</accession>